<protein>
    <recommendedName>
        <fullName>Transcription factor FAMA</fullName>
    </recommendedName>
    <alternativeName>
        <fullName>Basic helix-loop-helix protein 97</fullName>
        <shortName>AtbHLH97</shortName>
        <shortName>bHLH 97</shortName>
    </alternativeName>
    <alternativeName>
        <fullName>Transcription factor EN 14</fullName>
    </alternativeName>
    <alternativeName>
        <fullName>bHLH transcription factor bHLH097</fullName>
    </alternativeName>
</protein>
<dbReference type="EMBL" id="AB028621">
    <property type="protein sequence ID" value="BAB01355.1"/>
    <property type="status" value="ALT_SEQ"/>
    <property type="molecule type" value="Genomic_DNA"/>
</dbReference>
<dbReference type="EMBL" id="CP002686">
    <property type="protein sequence ID" value="AEE76862.1"/>
    <property type="molecule type" value="Genomic_DNA"/>
</dbReference>
<dbReference type="EMBL" id="AK221324">
    <property type="protein sequence ID" value="BAD94119.1"/>
    <property type="molecule type" value="mRNA"/>
</dbReference>
<dbReference type="EMBL" id="BT028961">
    <property type="protein sequence ID" value="ABI54336.1"/>
    <property type="molecule type" value="mRNA"/>
</dbReference>
<dbReference type="EMBL" id="AF488624">
    <property type="status" value="NOT_ANNOTATED_CDS"/>
    <property type="molecule type" value="mRNA"/>
</dbReference>
<dbReference type="RefSeq" id="NP_189056.2">
    <property type="nucleotide sequence ID" value="NM_113319.5"/>
</dbReference>
<dbReference type="SMR" id="Q56YJ8"/>
<dbReference type="BioGRID" id="7332">
    <property type="interactions" value="112"/>
</dbReference>
<dbReference type="FunCoup" id="Q56YJ8">
    <property type="interactions" value="119"/>
</dbReference>
<dbReference type="IntAct" id="Q56YJ8">
    <property type="interactions" value="17"/>
</dbReference>
<dbReference type="STRING" id="3702.Q56YJ8"/>
<dbReference type="PaxDb" id="3702-AT3G24140.1"/>
<dbReference type="EnsemblPlants" id="AT3G24140.1">
    <property type="protein sequence ID" value="AT3G24140.1"/>
    <property type="gene ID" value="AT3G24140"/>
</dbReference>
<dbReference type="GeneID" id="822000"/>
<dbReference type="Gramene" id="AT3G24140.1">
    <property type="protein sequence ID" value="AT3G24140.1"/>
    <property type="gene ID" value="AT3G24140"/>
</dbReference>
<dbReference type="KEGG" id="ath:AT3G24140"/>
<dbReference type="Araport" id="AT3G24140"/>
<dbReference type="TAIR" id="AT3G24140">
    <property type="gene designation" value="FMA"/>
</dbReference>
<dbReference type="eggNOG" id="ENOG502QRJH">
    <property type="taxonomic scope" value="Eukaryota"/>
</dbReference>
<dbReference type="HOGENOM" id="CLU_044652_3_0_1"/>
<dbReference type="InParanoid" id="Q56YJ8"/>
<dbReference type="OrthoDB" id="1939483at2759"/>
<dbReference type="PhylomeDB" id="Q56YJ8"/>
<dbReference type="PRO" id="PR:Q56YJ8"/>
<dbReference type="Proteomes" id="UP000006548">
    <property type="component" value="Chromosome 3"/>
</dbReference>
<dbReference type="ExpressionAtlas" id="Q56YJ8">
    <property type="expression patterns" value="baseline and differential"/>
</dbReference>
<dbReference type="GO" id="GO:0005634">
    <property type="term" value="C:nucleus"/>
    <property type="evidence" value="ECO:0000314"/>
    <property type="project" value="TAIR"/>
</dbReference>
<dbReference type="GO" id="GO:0003677">
    <property type="term" value="F:DNA binding"/>
    <property type="evidence" value="ECO:0007669"/>
    <property type="project" value="UniProtKB-KW"/>
</dbReference>
<dbReference type="GO" id="GO:0003700">
    <property type="term" value="F:DNA-binding transcription factor activity"/>
    <property type="evidence" value="ECO:0000250"/>
    <property type="project" value="TAIR"/>
</dbReference>
<dbReference type="GO" id="GO:0046983">
    <property type="term" value="F:protein dimerization activity"/>
    <property type="evidence" value="ECO:0007669"/>
    <property type="project" value="InterPro"/>
</dbReference>
<dbReference type="GO" id="GO:0010052">
    <property type="term" value="P:guard cell differentiation"/>
    <property type="evidence" value="ECO:0000315"/>
    <property type="project" value="UniProtKB"/>
</dbReference>
<dbReference type="GO" id="GO:0010377">
    <property type="term" value="P:guard cell fate commitment"/>
    <property type="evidence" value="ECO:0000316"/>
    <property type="project" value="UniProtKB"/>
</dbReference>
<dbReference type="GO" id="GO:0010444">
    <property type="term" value="P:guard mother cell differentiation"/>
    <property type="evidence" value="ECO:0000315"/>
    <property type="project" value="UniProtKB"/>
</dbReference>
<dbReference type="GO" id="GO:0051782">
    <property type="term" value="P:negative regulation of cell division"/>
    <property type="evidence" value="ECO:0000315"/>
    <property type="project" value="TAIR"/>
</dbReference>
<dbReference type="GO" id="GO:0045597">
    <property type="term" value="P:positive regulation of cell differentiation"/>
    <property type="evidence" value="ECO:0000315"/>
    <property type="project" value="TAIR"/>
</dbReference>
<dbReference type="GO" id="GO:0045893">
    <property type="term" value="P:positive regulation of DNA-templated transcription"/>
    <property type="evidence" value="ECO:0000314"/>
    <property type="project" value="TAIR"/>
</dbReference>
<dbReference type="GO" id="GO:0090547">
    <property type="term" value="P:response to low humidity"/>
    <property type="evidence" value="ECO:0000270"/>
    <property type="project" value="UniProtKB"/>
</dbReference>
<dbReference type="CDD" id="cd04873">
    <property type="entry name" value="ACT_UUR-ACR-like"/>
    <property type="match status" value="1"/>
</dbReference>
<dbReference type="CDD" id="cd11448">
    <property type="entry name" value="bHLH_AtFAMA_like"/>
    <property type="match status" value="1"/>
</dbReference>
<dbReference type="FunFam" id="4.10.280.10:FF:000050">
    <property type="entry name" value="Basic helix-loop-helix transcription factor"/>
    <property type="match status" value="1"/>
</dbReference>
<dbReference type="Gene3D" id="4.10.280.10">
    <property type="entry name" value="Helix-loop-helix DNA-binding domain"/>
    <property type="match status" value="1"/>
</dbReference>
<dbReference type="InterPro" id="IPR054502">
    <property type="entry name" value="bHLH-TF_ACT-like_plant"/>
</dbReference>
<dbReference type="InterPro" id="IPR011598">
    <property type="entry name" value="bHLH_dom"/>
</dbReference>
<dbReference type="InterPro" id="IPR044283">
    <property type="entry name" value="FAMA/SPEECHLESS/MUTE-like"/>
</dbReference>
<dbReference type="InterPro" id="IPR036638">
    <property type="entry name" value="HLH_DNA-bd_sf"/>
</dbReference>
<dbReference type="PANTHER" id="PTHR46684">
    <property type="entry name" value="TRANSCRIPTION FACTOR FAMA"/>
    <property type="match status" value="1"/>
</dbReference>
<dbReference type="PANTHER" id="PTHR46684:SF6">
    <property type="entry name" value="TRANSCRIPTION FACTOR FAMA"/>
    <property type="match status" value="1"/>
</dbReference>
<dbReference type="Pfam" id="PF22754">
    <property type="entry name" value="bHLH-TF_ACT-like_plant"/>
    <property type="match status" value="1"/>
</dbReference>
<dbReference type="Pfam" id="PF00010">
    <property type="entry name" value="HLH"/>
    <property type="match status" value="1"/>
</dbReference>
<dbReference type="SMART" id="SM00353">
    <property type="entry name" value="HLH"/>
    <property type="match status" value="1"/>
</dbReference>
<dbReference type="SUPFAM" id="SSF47459">
    <property type="entry name" value="HLH, helix-loop-helix DNA-binding domain"/>
    <property type="match status" value="1"/>
</dbReference>
<dbReference type="PROSITE" id="PS50888">
    <property type="entry name" value="BHLH"/>
    <property type="match status" value="1"/>
</dbReference>
<reference key="1">
    <citation type="journal article" date="2000" name="DNA Res.">
        <title>Structural analysis of Arabidopsis thaliana chromosome 3. I. Sequence features of the regions of 4,504,864 bp covered by sixty P1 and TAC clones.</title>
        <authorList>
            <person name="Sato S."/>
            <person name="Nakamura Y."/>
            <person name="Kaneko T."/>
            <person name="Katoh T."/>
            <person name="Asamizu E."/>
            <person name="Tabata S."/>
        </authorList>
    </citation>
    <scope>NUCLEOTIDE SEQUENCE [LARGE SCALE GENOMIC DNA]</scope>
    <source>
        <strain>cv. Columbia</strain>
    </source>
</reference>
<reference key="2">
    <citation type="journal article" date="2017" name="Plant J.">
        <title>Araport11: a complete reannotation of the Arabidopsis thaliana reference genome.</title>
        <authorList>
            <person name="Cheng C.Y."/>
            <person name="Krishnakumar V."/>
            <person name="Chan A.P."/>
            <person name="Thibaud-Nissen F."/>
            <person name="Schobel S."/>
            <person name="Town C.D."/>
        </authorList>
    </citation>
    <scope>GENOME REANNOTATION</scope>
    <source>
        <strain>cv. Columbia</strain>
    </source>
</reference>
<reference key="3">
    <citation type="submission" date="2005-03" db="EMBL/GenBank/DDBJ databases">
        <title>Large-scale analysis of RIKEN Arabidopsis full-length (RAFL) cDNAs.</title>
        <authorList>
            <person name="Totoki Y."/>
            <person name="Seki M."/>
            <person name="Ishida J."/>
            <person name="Nakajima M."/>
            <person name="Enju A."/>
            <person name="Kamiya A."/>
            <person name="Narusaka M."/>
            <person name="Shin-i T."/>
            <person name="Nakagawa M."/>
            <person name="Sakamoto N."/>
            <person name="Oishi K."/>
            <person name="Kohara Y."/>
            <person name="Kobayashi M."/>
            <person name="Toyoda A."/>
            <person name="Sakaki Y."/>
            <person name="Sakurai T."/>
            <person name="Iida K."/>
            <person name="Akiyama K."/>
            <person name="Satou M."/>
            <person name="Toyoda T."/>
            <person name="Konagaya A."/>
            <person name="Carninci P."/>
            <person name="Kawai J."/>
            <person name="Hayashizaki Y."/>
            <person name="Shinozaki K."/>
        </authorList>
    </citation>
    <scope>NUCLEOTIDE SEQUENCE [LARGE SCALE MRNA]</scope>
    <source>
        <strain>cv. Columbia</strain>
    </source>
</reference>
<reference key="4">
    <citation type="submission" date="2006-09" db="EMBL/GenBank/DDBJ databases">
        <title>Arabidopsis ORF clones.</title>
        <authorList>
            <person name="Bautista V.R."/>
            <person name="Kim C.J."/>
            <person name="Chen H."/>
            <person name="Quinitio C."/>
            <person name="Ecker J.R."/>
        </authorList>
    </citation>
    <scope>NUCLEOTIDE SEQUENCE [LARGE SCALE MRNA]</scope>
    <source>
        <strain>cv. Columbia</strain>
    </source>
</reference>
<reference key="5">
    <citation type="journal article" date="2003" name="Mol. Biol. Evol.">
        <title>The basic helix-loop-helix transcription factor family in plants: a genome-wide study of protein structure and functional diversity.</title>
        <authorList>
            <person name="Heim M.A."/>
            <person name="Jakoby M."/>
            <person name="Werber M."/>
            <person name="Martin C."/>
            <person name="Weisshaar B."/>
            <person name="Bailey P.C."/>
        </authorList>
    </citation>
    <scope>NUCLEOTIDE SEQUENCE [MRNA] OF 191-414</scope>
    <scope>TISSUE SPECIFICITY</scope>
    <scope>GENE FAMILY</scope>
    <scope>NOMENCLATURE</scope>
    <source>
        <strain>cv. Columbia</strain>
        <tissue>Flower</tissue>
    </source>
</reference>
<reference key="6">
    <citation type="journal article" date="2003" name="Plant Cell">
        <title>The Arabidopsis basic/helix-loop-helix transcription factor family.</title>
        <authorList>
            <person name="Toledo-Ortiz G."/>
            <person name="Huq E."/>
            <person name="Quail P.H."/>
        </authorList>
    </citation>
    <scope>GENE FAMILY</scope>
</reference>
<reference key="7">
    <citation type="journal article" date="2003" name="Plant Cell">
        <title>Update on the basic helix-loop-helix transcription factor gene family in Arabidopsis thaliana.</title>
        <authorList>
            <person name="Bailey P.C."/>
            <person name="Martin C."/>
            <person name="Toledo-Ortiz G."/>
            <person name="Quail P.H."/>
            <person name="Huq E."/>
            <person name="Heim M.A."/>
            <person name="Jakoby M."/>
            <person name="Werber M."/>
            <person name="Weisshaar B."/>
        </authorList>
    </citation>
    <scope>GENE FAMILY</scope>
    <scope>NOMENCLATURE</scope>
</reference>
<reference key="8">
    <citation type="journal article" date="2006" name="Plant Cell">
        <title>Arabidopsis FAMA controls the final proliferation/differentiation switch during stomatal development.</title>
        <authorList>
            <person name="Ohashi-Ito K."/>
            <person name="Bergmann D.C."/>
        </authorList>
    </citation>
    <scope>FUNCTION</scope>
    <scope>INTERACTION WITH BHLH071 AND BHLH093</scope>
    <scope>SUBCELLULAR LOCATION</scope>
    <scope>DEVELOPMENTAL STAGE</scope>
    <scope>TISSUE SPECIFICITY</scope>
</reference>
<reference key="9">
    <citation type="journal article" date="2007" name="Bioessays">
        <title>Breaking the silence: three bHLH proteins direct cell-fate decisions during stomatal development.</title>
        <authorList>
            <person name="Pillitteri L.J."/>
            <person name="Torii K.U."/>
        </authorList>
    </citation>
    <scope>REVIEW</scope>
</reference>
<reference key="10">
    <citation type="journal article" date="2007" name="Nature">
        <title>Termination of asymmetric cell division and differentiation of stomata.</title>
        <authorList>
            <person name="Pillitteri L.J."/>
            <person name="Sloan D.B."/>
            <person name="Bogenschutz N.L."/>
            <person name="Torii K.U."/>
        </authorList>
    </citation>
    <scope>FUNCTION</scope>
</reference>
<reference key="11">
    <citation type="journal article" date="2007" name="Nature">
        <title>Transcription factor control of asymmetric cell divisions that establish the stomatal lineage.</title>
        <authorList>
            <person name="MacAlister C.A."/>
            <person name="Ohashi-Ito K."/>
            <person name="Bergmann D.C."/>
        </authorList>
    </citation>
    <scope>FUNCTION</scope>
</reference>
<reference key="12">
    <citation type="journal article" date="2007" name="Trends Plant Sci.">
        <title>bHLH proteins know when to make a stoma.</title>
        <authorList>
            <person name="Serna L."/>
        </authorList>
    </citation>
    <scope>REVIEW</scope>
</reference>
<reference key="13">
    <citation type="journal article" date="2012" name="J. Exp. Bot.">
        <title>Low relative humidity triggers RNA-directed de novo DNA methylation and suppression of genes controlling stomatal development.</title>
        <authorList>
            <person name="Tricker P.J."/>
            <person name="Gibbings J.G."/>
            <person name="Rodriguez Lopez C.M."/>
            <person name="Hadley P."/>
            <person name="Wilkinson M.J."/>
        </authorList>
    </citation>
    <scope>REPRESSION BY LOW RELATIVE HUMIDITY</scope>
    <source>
        <strain>cv. Columbia</strain>
        <strain>cv. Landsberg erecta</strain>
    </source>
</reference>
<reference key="14">
    <citation type="journal article" date="2014" name="Elife">
        <title>Irreversible fate commitment in the Arabidopsis stomatal lineage requires a FAMA and RETINOBLASTOMA-RELATED module.</title>
        <authorList>
            <person name="Matos J.L."/>
            <person name="Lau O.S."/>
            <person name="Hachez C."/>
            <person name="Cruz-Ramirez A."/>
            <person name="Scheres B."/>
            <person name="Bergmann D.C."/>
        </authorList>
    </citation>
    <scope>INTERACTION WITH RBR1</scope>
    <scope>MUTAGENESIS OF 251-CYS--GLU-253</scope>
</reference>
<reference key="15">
    <citation type="journal article" date="2014" name="Plant J.">
        <title>Deep functional redundancy between FAMA and FOUR LIPS in stomatal development.</title>
        <authorList>
            <person name="Lee E."/>
            <person name="Lucas J.R."/>
            <person name="Sack F.D."/>
        </authorList>
    </citation>
    <scope>FUNCTION</scope>
    <scope>DISRUPTION PHENOTYPE</scope>
    <scope>DEVELOPMENTAL STAGE</scope>
    <scope>INTERACTION WITH RBR1</scope>
    <source>
        <strain>cv. Columbia</strain>
    </source>
</reference>
<reference key="16">
    <citation type="journal article" date="2014" name="Plant J.">
        <title>Arabidopsis guard cell integrity involves the epigenetic stabilization of the FLP and FAMA transcription factor genes.</title>
        <authorList>
            <person name="Lee E."/>
            <person name="Lucas J.R."/>
            <person name="Goodrich J."/>
            <person name="Sack F.D."/>
        </authorList>
    </citation>
    <scope>FUNCTION</scope>
    <source>
        <strain>cv. Columbia</strain>
    </source>
</reference>
<gene>
    <name type="primary">FAMA</name>
    <name type="synonym">BHLH97</name>
    <name type="synonym">EN14</name>
    <name type="synonym">FMA</name>
    <name type="ordered locus">At3g24140</name>
    <name type="ORF">MUJ8.4</name>
</gene>
<evidence type="ECO:0000255" key="1">
    <source>
        <dbReference type="PROSITE-ProRule" id="PRU00981"/>
    </source>
</evidence>
<evidence type="ECO:0000256" key="2">
    <source>
        <dbReference type="SAM" id="MobiDB-lite"/>
    </source>
</evidence>
<evidence type="ECO:0000269" key="3">
    <source>
    </source>
</evidence>
<evidence type="ECO:0000269" key="4">
    <source>
    </source>
</evidence>
<evidence type="ECO:0000269" key="5">
    <source>
    </source>
</evidence>
<evidence type="ECO:0000269" key="6">
    <source>
    </source>
</evidence>
<evidence type="ECO:0000269" key="7">
    <source>
    </source>
</evidence>
<evidence type="ECO:0000269" key="8">
    <source>
    </source>
</evidence>
<evidence type="ECO:0000269" key="9">
    <source>
    </source>
</evidence>
<evidence type="ECO:0000269" key="10">
    <source>
    </source>
</evidence>
<evidence type="ECO:0000305" key="11"/>
<comment type="function">
    <text evidence="4 5 6 8 9">Transcription activator (PubMed:17088607, PubMed:17183265, PubMed:17183267). Together with MYB88 and MYB124, ensures that stomata contain just two guard cells (GCs) by enforcing a single symmetric precursor cell division before stomatal maturity (PubMed:24571519). Together with SPCH and MUTE, regulates the stomata formation. Required to promote differentiation and morphogenesis of stomatal guard cells and to halt proliferative divisions in their immediate precursors. Mediates the formation of stomata (PubMed:17088607, PubMed:17183265, PubMed:17183267). Prevents histone H3K27me3 marks and derepresses stem cell gene expression (PubMed:24654956).</text>
</comment>
<comment type="subunit">
    <text evidence="4 8 10">Interacts with FAMA through its LxCxE motif (PubMed:25303364). Self-interacts. Also interacts with bHLH071 and bHLH093 (PubMed:17088607). Interacts with RBR1 (PubMed:24571519).</text>
</comment>
<comment type="subcellular location">
    <subcellularLocation>
        <location evidence="1 4">Nucleus</location>
    </subcellularLocation>
</comment>
<comment type="tissue specificity">
    <text evidence="3 4">Resctricted to stomatal cell lineages (at protein level). Expressed in roots, leaves, stems, and flowers.</text>
</comment>
<comment type="developmental stage">
    <text evidence="4 8">Not expressed in meristemoids, but strongly expressed in guard mother cells (GMCs) and in young guard cells (at protein level) (PubMed:17088607). Expressed at the transition to terminal stomatal differentiation, just before and after the symmetric division of stomatal differentiation, being confined to late-stage GMC and to young, still differentiating guard cells (PubMed:24571519).</text>
</comment>
<comment type="induction">
    <text evidence="7">Inhibited by low relative humidity (LRH) via epigenetic CG methylation, thus leading to a reduced stomatal index.</text>
</comment>
<comment type="disruption phenotype">
    <text evidence="8">Excess symmetric divisions during stomata development leading to abnormal guard cells clusters formation. Reduced seeds set and low biomass. These phenotypes are complemented by MYB124.</text>
</comment>
<comment type="miscellaneous">
    <text>Plants overexpressing FAMA exhibit ectopic stomata.</text>
</comment>
<comment type="sequence caution" evidence="11">
    <conflict type="erroneous gene model prediction">
        <sequence resource="EMBL-CDS" id="BAB01355"/>
    </conflict>
</comment>
<sequence length="414" mass="46408">MDKDYSAPNFLGESSGGNDDNSSGMIDYMFNRNLQQQQKQSMPQQQQHQLSPSGFGATPFDKMNFSDVMQFADFGSKLALNQTRNQDDQETGIDPVYFLKFPVLNDKIEDHNQTQHLMPSHQTSQEGGECGGNIGNVFLEEKEDQDDDNDNNSVQLRFIGGEEEDRENKNVTKKEVKSKRKRARTSKTSEEVESQRMTHIAVERNRRKQMNEHLRVLRSLMPGSYVQRGDQASIIGGAIEFVRELEQLLQCLESQKRRRILGETGRDMTTTTTSSSSPITTVANQAQPLIITGNVTELEGGGGLREETAENKSCLADVEVKLLGFDAMIKILSRRRPGQLIKTIAALEDLHLSILHTNITTMEQTVLYSFNVKITSETRFTAEDIASSIQQIFSFIHANTNISGSSNLGNIVFT</sequence>
<keyword id="KW-0010">Activator</keyword>
<keyword id="KW-0217">Developmental protein</keyword>
<keyword id="KW-0238">DNA-binding</keyword>
<keyword id="KW-0539">Nucleus</keyword>
<keyword id="KW-1185">Reference proteome</keyword>
<keyword id="KW-0804">Transcription</keyword>
<keyword id="KW-0805">Transcription regulation</keyword>
<feature type="chain" id="PRO_0000358843" description="Transcription factor FAMA">
    <location>
        <begin position="1"/>
        <end position="414"/>
    </location>
</feature>
<feature type="domain" description="bHLH" evidence="1">
    <location>
        <begin position="194"/>
        <end position="245"/>
    </location>
</feature>
<feature type="region of interest" description="Disordered" evidence="2">
    <location>
        <begin position="1"/>
        <end position="61"/>
    </location>
</feature>
<feature type="region of interest" description="Disordered" evidence="2">
    <location>
        <begin position="142"/>
        <end position="197"/>
    </location>
</feature>
<feature type="short sequence motif" description="LxCxE motif" evidence="10">
    <location>
        <begin position="249"/>
        <end position="253"/>
    </location>
</feature>
<feature type="compositionally biased region" description="Low complexity" evidence="2">
    <location>
        <begin position="12"/>
        <end position="24"/>
    </location>
</feature>
<feature type="compositionally biased region" description="Low complexity" evidence="2">
    <location>
        <begin position="35"/>
        <end position="49"/>
    </location>
</feature>
<feature type="compositionally biased region" description="Basic and acidic residues" evidence="2">
    <location>
        <begin position="166"/>
        <end position="175"/>
    </location>
</feature>
<feature type="compositionally biased region" description="Basic residues" evidence="2">
    <location>
        <begin position="176"/>
        <end position="185"/>
    </location>
</feature>
<feature type="compositionally biased region" description="Basic and acidic residues" evidence="2">
    <location>
        <begin position="187"/>
        <end position="197"/>
    </location>
</feature>
<feature type="mutagenesis site" description="Abolishes interaction with RBR1 that leads to a stomatal lineage-specific loss of terminal commitment." evidence="10">
    <original>CLE</original>
    <variation>GLK</variation>
    <location>
        <begin position="251"/>
        <end position="253"/>
    </location>
</feature>
<name>FAMA_ARATH</name>
<accession>Q56YJ8</accession>
<accession>Q9LRN3</accession>
<proteinExistence type="evidence at protein level"/>
<organism>
    <name type="scientific">Arabidopsis thaliana</name>
    <name type="common">Mouse-ear cress</name>
    <dbReference type="NCBI Taxonomy" id="3702"/>
    <lineage>
        <taxon>Eukaryota</taxon>
        <taxon>Viridiplantae</taxon>
        <taxon>Streptophyta</taxon>
        <taxon>Embryophyta</taxon>
        <taxon>Tracheophyta</taxon>
        <taxon>Spermatophyta</taxon>
        <taxon>Magnoliopsida</taxon>
        <taxon>eudicotyledons</taxon>
        <taxon>Gunneridae</taxon>
        <taxon>Pentapetalae</taxon>
        <taxon>rosids</taxon>
        <taxon>malvids</taxon>
        <taxon>Brassicales</taxon>
        <taxon>Brassicaceae</taxon>
        <taxon>Camelineae</taxon>
        <taxon>Arabidopsis</taxon>
    </lineage>
</organism>